<proteinExistence type="inferred from homology"/>
<feature type="chain" id="PRO_0000360881" description="Tryptophan 2,3-dioxygenase">
    <location>
        <begin position="1"/>
        <end position="379"/>
    </location>
</feature>
<feature type="binding site" evidence="1">
    <location>
        <begin position="57"/>
        <end position="61"/>
    </location>
    <ligand>
        <name>substrate</name>
    </ligand>
</feature>
<feature type="binding site" evidence="1">
    <location>
        <position position="128"/>
    </location>
    <ligand>
        <name>substrate</name>
    </ligand>
</feature>
<feature type="binding site" description="axial binding residue" evidence="1">
    <location>
        <position position="312"/>
    </location>
    <ligand>
        <name>heme</name>
        <dbReference type="ChEBI" id="CHEBI:30413"/>
    </ligand>
    <ligandPart>
        <name>Fe</name>
        <dbReference type="ChEBI" id="CHEBI:18248"/>
    </ligandPart>
</feature>
<feature type="binding site" evidence="1">
    <location>
        <position position="327"/>
    </location>
    <ligand>
        <name>substrate</name>
    </ligand>
</feature>
<reference key="1">
    <citation type="journal article" date="1995" name="Genetics">
        <title>Molecular variation at the vermilion locus in geographically diverse populations of Drosophila melanogaster and D. simulans.</title>
        <authorList>
            <person name="Begun D.J."/>
            <person name="Aquadro C.F."/>
        </authorList>
    </citation>
    <scope>NUCLEOTIDE SEQUENCE [GENOMIC DNA]</scope>
</reference>
<reference key="2">
    <citation type="journal article" date="2007" name="Nature">
        <title>Evolution of genes and genomes on the Drosophila phylogeny.</title>
        <authorList>
            <consortium name="Drosophila 12 genomes consortium"/>
        </authorList>
    </citation>
    <scope>NUCLEOTIDE SEQUENCE [LARGE SCALE GENOMIC DNA]</scope>
</reference>
<name>T23O_DROSI</name>
<comment type="function">
    <text evidence="1">Heme-dependent dioxygenase that catalyzes the oxidative cleavage of the L-tryptophan (L-Trp) pyrrole ring and converts L-tryptophan to N-formyl-L-kynurenine. Catalyzes the oxidative cleavage of the indole moiety.</text>
</comment>
<comment type="catalytic activity">
    <reaction evidence="1">
        <text>L-tryptophan + O2 = N-formyl-L-kynurenine</text>
        <dbReference type="Rhea" id="RHEA:24536"/>
        <dbReference type="ChEBI" id="CHEBI:15379"/>
        <dbReference type="ChEBI" id="CHEBI:57912"/>
        <dbReference type="ChEBI" id="CHEBI:58629"/>
        <dbReference type="EC" id="1.13.11.11"/>
    </reaction>
</comment>
<comment type="cofactor">
    <cofactor evidence="1">
        <name>heme</name>
        <dbReference type="ChEBI" id="CHEBI:30413"/>
    </cofactor>
    <text evidence="1">Binds 1 heme group per subunit.</text>
</comment>
<comment type="pathway">
    <text evidence="1">Amino-acid degradation; L-tryptophan degradation via kynurenine pathway; L-kynurenine from L-tryptophan: step 1/2.</text>
</comment>
<comment type="pathway">
    <text evidence="1">Pigment biosynthesis; ommochrome biosynthesis.</text>
</comment>
<comment type="subunit">
    <text evidence="1">Homotetramer. Dimer of dimers.</text>
</comment>
<comment type="similarity">
    <text evidence="1">Belongs to the tryptophan 2,3-dioxygenase family.</text>
</comment>
<gene>
    <name evidence="1" type="primary">v</name>
    <name type="ORF">GD16993</name>
</gene>
<protein>
    <recommendedName>
        <fullName evidence="1">Tryptophan 2,3-dioxygenase</fullName>
        <shortName evidence="1">TDO</shortName>
        <ecNumber evidence="1">1.13.11.11</ecNumber>
    </recommendedName>
    <alternativeName>
        <fullName evidence="1">Protein vermilion</fullName>
    </alternativeName>
    <alternativeName>
        <fullName evidence="1">Tryptamin 2,3-dioxygenase</fullName>
    </alternativeName>
    <alternativeName>
        <fullName evidence="1">Tryptophan oxygenase</fullName>
        <shortName evidence="1">TO</shortName>
        <shortName evidence="1">TRPO</shortName>
    </alternativeName>
    <alternativeName>
        <fullName evidence="1">Tryptophan pyrrolase</fullName>
    </alternativeName>
    <alternativeName>
        <fullName evidence="1">Tryptophanase</fullName>
    </alternativeName>
</protein>
<sequence length="379" mass="44435">MSCPYAGNGNDHDDSAVPLTTEVGKIYGEYLMLDKLLDAQCMLSEEDKRPVHDEHLFIITHQAYELWFKQIIFEFDSIRDMLDAEVIDETKTLEIVKRLNRVVLILKLLVDQVPILETMTPLDFMDFRKYLAPASGFQSLQFRLIENKLGVLTEQRVRYNQKYSDVFSDEEARNSIRNSEKDPSLLELVQRWLERTPGLEETGFNFWAKFQESVDRFLEAQVQSAMEEPVEKAKNYRLMDIEKRREVYRSIFDPAVHDALVRRGDRRFSHRALQGAIMITFYRDEPRFSQPHQLLTLLMDIDSLITKWRYNHVIMVQRMIGSQQLGTGGSSGYQYLRSTLSDRYKVFLDLFNLSTFLIPREAIPPLDETIRKKLINKSV</sequence>
<keyword id="KW-0223">Dioxygenase</keyword>
<keyword id="KW-0349">Heme</keyword>
<keyword id="KW-0408">Iron</keyword>
<keyword id="KW-0479">Metal-binding</keyword>
<keyword id="KW-0560">Oxidoreductase</keyword>
<keyword id="KW-1185">Reference proteome</keyword>
<keyword id="KW-0823">Tryptophan catabolism</keyword>
<organism>
    <name type="scientific">Drosophila simulans</name>
    <name type="common">Fruit fly</name>
    <dbReference type="NCBI Taxonomy" id="7240"/>
    <lineage>
        <taxon>Eukaryota</taxon>
        <taxon>Metazoa</taxon>
        <taxon>Ecdysozoa</taxon>
        <taxon>Arthropoda</taxon>
        <taxon>Hexapoda</taxon>
        <taxon>Insecta</taxon>
        <taxon>Pterygota</taxon>
        <taxon>Neoptera</taxon>
        <taxon>Endopterygota</taxon>
        <taxon>Diptera</taxon>
        <taxon>Brachycera</taxon>
        <taxon>Muscomorpha</taxon>
        <taxon>Ephydroidea</taxon>
        <taxon>Drosophilidae</taxon>
        <taxon>Drosophila</taxon>
        <taxon>Sophophora</taxon>
    </lineage>
</organism>
<accession>Q24630</accession>
<evidence type="ECO:0000255" key="1">
    <source>
        <dbReference type="HAMAP-Rule" id="MF_03020"/>
    </source>
</evidence>
<dbReference type="EC" id="1.13.11.11" evidence="1"/>
<dbReference type="EMBL" id="U27204">
    <property type="protein sequence ID" value="AAA81532.1"/>
    <property type="molecule type" value="Genomic_DNA"/>
</dbReference>
<dbReference type="EMBL" id="CM000366">
    <property type="protein sequence ID" value="EDX17597.1"/>
    <property type="molecule type" value="Genomic_DNA"/>
</dbReference>
<dbReference type="SMR" id="Q24630"/>
<dbReference type="STRING" id="7240.Q24630"/>
<dbReference type="EnsemblMetazoa" id="FBtr0216903">
    <property type="protein sequence ID" value="FBpp0215395"/>
    <property type="gene ID" value="FBgn0013884"/>
</dbReference>
<dbReference type="EnsemblMetazoa" id="XM_002106603.4">
    <property type="protein sequence ID" value="XP_002106639.1"/>
    <property type="gene ID" value="LOC6725632"/>
</dbReference>
<dbReference type="GeneID" id="6725632"/>
<dbReference type="KEGG" id="dsi:Dsimw501_GD16993"/>
<dbReference type="CTD" id="136040130"/>
<dbReference type="HOGENOM" id="CLU_045599_1_1_1"/>
<dbReference type="OMA" id="WRWRNDH"/>
<dbReference type="OrthoDB" id="447477at2759"/>
<dbReference type="PhylomeDB" id="Q24630"/>
<dbReference type="UniPathway" id="UPA00271"/>
<dbReference type="UniPathway" id="UPA00333">
    <property type="reaction ID" value="UER00453"/>
</dbReference>
<dbReference type="Proteomes" id="UP000000304">
    <property type="component" value="Chromosome X"/>
</dbReference>
<dbReference type="Bgee" id="FBgn0013884">
    <property type="expression patterns" value="Expressed in adult organism and 3 other cell types or tissues"/>
</dbReference>
<dbReference type="GO" id="GO:0020037">
    <property type="term" value="F:heme binding"/>
    <property type="evidence" value="ECO:0000250"/>
    <property type="project" value="UniProtKB"/>
</dbReference>
<dbReference type="GO" id="GO:0046872">
    <property type="term" value="F:metal ion binding"/>
    <property type="evidence" value="ECO:0007669"/>
    <property type="project" value="UniProtKB-KW"/>
</dbReference>
<dbReference type="GO" id="GO:0004833">
    <property type="term" value="F:tryptophan 2,3-dioxygenase activity"/>
    <property type="evidence" value="ECO:0000250"/>
    <property type="project" value="UniProtKB"/>
</dbReference>
<dbReference type="GO" id="GO:0019442">
    <property type="term" value="P:L-tryptophan catabolic process to acetyl-CoA"/>
    <property type="evidence" value="ECO:0007669"/>
    <property type="project" value="TreeGrafter"/>
</dbReference>
<dbReference type="GO" id="GO:0019441">
    <property type="term" value="P:L-tryptophan catabolic process to kynurenine"/>
    <property type="evidence" value="ECO:0000250"/>
    <property type="project" value="UniProtKB"/>
</dbReference>
<dbReference type="GO" id="GO:0006727">
    <property type="term" value="P:ommochrome biosynthetic process"/>
    <property type="evidence" value="ECO:0007669"/>
    <property type="project" value="UniProtKB-UniRule"/>
</dbReference>
<dbReference type="GO" id="GO:0051289">
    <property type="term" value="P:protein homotetramerization"/>
    <property type="evidence" value="ECO:0007669"/>
    <property type="project" value="EnsemblMetazoa"/>
</dbReference>
<dbReference type="FunFam" id="1.10.287.3810:FF:000001">
    <property type="entry name" value="Tryptophan 2,3-dioxygenase"/>
    <property type="match status" value="1"/>
</dbReference>
<dbReference type="Gene3D" id="1.10.287.3810">
    <property type="match status" value="1"/>
</dbReference>
<dbReference type="Gene3D" id="1.20.58.480">
    <property type="match status" value="1"/>
</dbReference>
<dbReference type="HAMAP" id="MF_01972">
    <property type="entry name" value="T23O"/>
    <property type="match status" value="1"/>
</dbReference>
<dbReference type="InterPro" id="IPR037217">
    <property type="entry name" value="Trp/Indoleamine_2_3_dOase-like"/>
</dbReference>
<dbReference type="InterPro" id="IPR004981">
    <property type="entry name" value="Trp_2_3_dOase"/>
</dbReference>
<dbReference type="PANTHER" id="PTHR10138">
    <property type="entry name" value="TRYPTOPHAN 2,3-DIOXYGENASE"/>
    <property type="match status" value="1"/>
</dbReference>
<dbReference type="PANTHER" id="PTHR10138:SF0">
    <property type="entry name" value="TRYPTOPHAN 2,3-DIOXYGENASE"/>
    <property type="match status" value="1"/>
</dbReference>
<dbReference type="Pfam" id="PF03301">
    <property type="entry name" value="Trp_dioxygenase"/>
    <property type="match status" value="1"/>
</dbReference>
<dbReference type="SUPFAM" id="SSF140959">
    <property type="entry name" value="Indolic compounds 2,3-dioxygenase-like"/>
    <property type="match status" value="1"/>
</dbReference>